<accession>Q5RES5</accession>
<name>THIM_PONAB</name>
<dbReference type="EC" id="2.3.1.16" evidence="3"/>
<dbReference type="EC" id="2.3.1.9" evidence="5"/>
<dbReference type="EC" id="3.1.2.-" evidence="3"/>
<dbReference type="EC" id="3.1.2.1" evidence="3"/>
<dbReference type="EC" id="3.1.2.2" evidence="2"/>
<dbReference type="EMBL" id="CR857441">
    <property type="protein sequence ID" value="CAH89732.1"/>
    <property type="molecule type" value="mRNA"/>
</dbReference>
<dbReference type="RefSeq" id="NP_001124791.1">
    <property type="nucleotide sequence ID" value="NM_001131319.1"/>
</dbReference>
<dbReference type="SMR" id="Q5RES5"/>
<dbReference type="FunCoup" id="Q5RES5">
    <property type="interactions" value="922"/>
</dbReference>
<dbReference type="STRING" id="9601.ENSPPYP00000010284"/>
<dbReference type="GeneID" id="100171644"/>
<dbReference type="KEGG" id="pon:100171644"/>
<dbReference type="CTD" id="10449"/>
<dbReference type="InParanoid" id="Q5RES5"/>
<dbReference type="OrthoDB" id="5404651at2759"/>
<dbReference type="UniPathway" id="UPA00659"/>
<dbReference type="Proteomes" id="UP000001595">
    <property type="component" value="Unplaced"/>
</dbReference>
<dbReference type="GO" id="GO:0005739">
    <property type="term" value="C:mitochondrion"/>
    <property type="evidence" value="ECO:0000250"/>
    <property type="project" value="UniProtKB"/>
</dbReference>
<dbReference type="GO" id="GO:0003985">
    <property type="term" value="F:acetyl-CoA C-acetyltransferase activity"/>
    <property type="evidence" value="ECO:0000250"/>
    <property type="project" value="UniProtKB"/>
</dbReference>
<dbReference type="GO" id="GO:0003988">
    <property type="term" value="F:acetyl-CoA C-acyltransferase activity"/>
    <property type="evidence" value="ECO:0000250"/>
    <property type="project" value="UniProtKB"/>
</dbReference>
<dbReference type="GO" id="GO:0003986">
    <property type="term" value="F:acetyl-CoA hydrolase activity"/>
    <property type="evidence" value="ECO:0007669"/>
    <property type="project" value="UniProtKB-EC"/>
</dbReference>
<dbReference type="GO" id="GO:0047617">
    <property type="term" value="F:fatty acyl-CoA hydrolase activity"/>
    <property type="evidence" value="ECO:0000250"/>
    <property type="project" value="UniProtKB"/>
</dbReference>
<dbReference type="GO" id="GO:0006635">
    <property type="term" value="P:fatty acid beta-oxidation"/>
    <property type="evidence" value="ECO:0007669"/>
    <property type="project" value="UniProtKB-UniPathway"/>
</dbReference>
<dbReference type="GO" id="GO:1901029">
    <property type="term" value="P:negative regulation of mitochondrial outer membrane permeabilization involved in apoptotic signaling pathway"/>
    <property type="evidence" value="ECO:0000250"/>
    <property type="project" value="UniProtKB"/>
</dbReference>
<dbReference type="CDD" id="cd00751">
    <property type="entry name" value="thiolase"/>
    <property type="match status" value="1"/>
</dbReference>
<dbReference type="FunFam" id="3.40.47.10:FF:000010">
    <property type="entry name" value="Acetyl-CoA acetyltransferase (Thiolase)"/>
    <property type="match status" value="1"/>
</dbReference>
<dbReference type="Gene3D" id="3.40.47.10">
    <property type="match status" value="2"/>
</dbReference>
<dbReference type="InterPro" id="IPR002155">
    <property type="entry name" value="Thiolase"/>
</dbReference>
<dbReference type="InterPro" id="IPR016039">
    <property type="entry name" value="Thiolase-like"/>
</dbReference>
<dbReference type="InterPro" id="IPR020615">
    <property type="entry name" value="Thiolase_acyl_enz_int_AS"/>
</dbReference>
<dbReference type="InterPro" id="IPR020610">
    <property type="entry name" value="Thiolase_AS"/>
</dbReference>
<dbReference type="InterPro" id="IPR020617">
    <property type="entry name" value="Thiolase_C"/>
</dbReference>
<dbReference type="InterPro" id="IPR020613">
    <property type="entry name" value="Thiolase_CS"/>
</dbReference>
<dbReference type="InterPro" id="IPR020616">
    <property type="entry name" value="Thiolase_N"/>
</dbReference>
<dbReference type="NCBIfam" id="TIGR01930">
    <property type="entry name" value="AcCoA-C-Actrans"/>
    <property type="match status" value="1"/>
</dbReference>
<dbReference type="PANTHER" id="PTHR18919:SF145">
    <property type="entry name" value="3-KETOACYL-COA THIOLASE, MITOCHONDRIAL"/>
    <property type="match status" value="1"/>
</dbReference>
<dbReference type="PANTHER" id="PTHR18919">
    <property type="entry name" value="ACETYL-COA C-ACYLTRANSFERASE"/>
    <property type="match status" value="1"/>
</dbReference>
<dbReference type="Pfam" id="PF02803">
    <property type="entry name" value="Thiolase_C"/>
    <property type="match status" value="1"/>
</dbReference>
<dbReference type="Pfam" id="PF00108">
    <property type="entry name" value="Thiolase_N"/>
    <property type="match status" value="1"/>
</dbReference>
<dbReference type="PIRSF" id="PIRSF000429">
    <property type="entry name" value="Ac-CoA_Ac_transf"/>
    <property type="match status" value="1"/>
</dbReference>
<dbReference type="SUPFAM" id="SSF53901">
    <property type="entry name" value="Thiolase-like"/>
    <property type="match status" value="2"/>
</dbReference>
<dbReference type="PROSITE" id="PS00098">
    <property type="entry name" value="THIOLASE_1"/>
    <property type="match status" value="1"/>
</dbReference>
<dbReference type="PROSITE" id="PS00737">
    <property type="entry name" value="THIOLASE_2"/>
    <property type="match status" value="1"/>
</dbReference>
<dbReference type="PROSITE" id="PS00099">
    <property type="entry name" value="THIOLASE_3"/>
    <property type="match status" value="1"/>
</dbReference>
<comment type="function">
    <text evidence="2 3">In the production of energy from fats, this is one of the enzymes that catalyzes the last step of the mitochondrial beta-oxidation pathway, an aerobic process breaking down fatty acids into acetyl-CoA. Using free coenzyme A/CoA, catalyzes the thiolytic cleavage of medium- to long-chain unbranched 3-oxoacyl-CoAs into acetyl-CoA and a fatty acyl-CoA shortened by two carbon atoms. Also catalyzes the condensation of two acetyl-CoA molecules into acetoacetyl-CoA and could be involved in the production of ketone bodies. Also displays hydrolase activity on various fatty acyl-CoAs (By similarity). Thereby, could be responsible for the production of acetate in a side reaction to beta-oxidation (By similarity). Abolishes BNIP3-mediated apoptosis and mitochondrial damage (By similarity).</text>
</comment>
<comment type="catalytic activity">
    <reaction evidence="3">
        <text>an acyl-CoA + acetyl-CoA = a 3-oxoacyl-CoA + CoA</text>
        <dbReference type="Rhea" id="RHEA:21564"/>
        <dbReference type="ChEBI" id="CHEBI:57287"/>
        <dbReference type="ChEBI" id="CHEBI:57288"/>
        <dbReference type="ChEBI" id="CHEBI:58342"/>
        <dbReference type="ChEBI" id="CHEBI:90726"/>
        <dbReference type="EC" id="2.3.1.16"/>
    </reaction>
    <physiologicalReaction direction="left-to-right" evidence="3">
        <dbReference type="Rhea" id="RHEA:21565"/>
    </physiologicalReaction>
    <physiologicalReaction direction="right-to-left" evidence="3">
        <dbReference type="Rhea" id="RHEA:21566"/>
    </physiologicalReaction>
</comment>
<comment type="catalytic activity">
    <reaction evidence="5">
        <text>2 acetyl-CoA = acetoacetyl-CoA + CoA</text>
        <dbReference type="Rhea" id="RHEA:21036"/>
        <dbReference type="ChEBI" id="CHEBI:57286"/>
        <dbReference type="ChEBI" id="CHEBI:57287"/>
        <dbReference type="ChEBI" id="CHEBI:57288"/>
        <dbReference type="EC" id="2.3.1.9"/>
    </reaction>
    <physiologicalReaction direction="left-to-right" evidence="3">
        <dbReference type="Rhea" id="RHEA:21037"/>
    </physiologicalReaction>
    <physiologicalReaction direction="right-to-left" evidence="3">
        <dbReference type="Rhea" id="RHEA:21038"/>
    </physiologicalReaction>
</comment>
<comment type="catalytic activity">
    <reaction evidence="3">
        <text>acetyl-CoA + H2O = acetate + CoA + H(+)</text>
        <dbReference type="Rhea" id="RHEA:20289"/>
        <dbReference type="ChEBI" id="CHEBI:15377"/>
        <dbReference type="ChEBI" id="CHEBI:15378"/>
        <dbReference type="ChEBI" id="CHEBI:30089"/>
        <dbReference type="ChEBI" id="CHEBI:57287"/>
        <dbReference type="ChEBI" id="CHEBI:57288"/>
        <dbReference type="EC" id="3.1.2.1"/>
    </reaction>
    <physiologicalReaction direction="left-to-right" evidence="3">
        <dbReference type="Rhea" id="RHEA:20290"/>
    </physiologicalReaction>
</comment>
<comment type="catalytic activity">
    <reaction evidence="3">
        <text>propanoyl-CoA + H2O = propanoate + CoA + H(+)</text>
        <dbReference type="Rhea" id="RHEA:40103"/>
        <dbReference type="ChEBI" id="CHEBI:15377"/>
        <dbReference type="ChEBI" id="CHEBI:15378"/>
        <dbReference type="ChEBI" id="CHEBI:17272"/>
        <dbReference type="ChEBI" id="CHEBI:57287"/>
        <dbReference type="ChEBI" id="CHEBI:57392"/>
    </reaction>
    <physiologicalReaction direction="left-to-right" evidence="3">
        <dbReference type="Rhea" id="RHEA:40104"/>
    </physiologicalReaction>
</comment>
<comment type="catalytic activity">
    <reaction evidence="3">
        <text>butanoyl-CoA + H2O = butanoate + CoA + H(+)</text>
        <dbReference type="Rhea" id="RHEA:40111"/>
        <dbReference type="ChEBI" id="CHEBI:15377"/>
        <dbReference type="ChEBI" id="CHEBI:15378"/>
        <dbReference type="ChEBI" id="CHEBI:17968"/>
        <dbReference type="ChEBI" id="CHEBI:57287"/>
        <dbReference type="ChEBI" id="CHEBI:57371"/>
    </reaction>
    <physiologicalReaction direction="left-to-right" evidence="3">
        <dbReference type="Rhea" id="RHEA:40112"/>
    </physiologicalReaction>
</comment>
<comment type="catalytic activity">
    <reaction evidence="3">
        <text>hexanoyl-CoA + H2O = hexanoate + CoA + H(+)</text>
        <dbReference type="Rhea" id="RHEA:40115"/>
        <dbReference type="ChEBI" id="CHEBI:15377"/>
        <dbReference type="ChEBI" id="CHEBI:15378"/>
        <dbReference type="ChEBI" id="CHEBI:17120"/>
        <dbReference type="ChEBI" id="CHEBI:57287"/>
        <dbReference type="ChEBI" id="CHEBI:62620"/>
    </reaction>
    <physiologicalReaction direction="left-to-right" evidence="3">
        <dbReference type="Rhea" id="RHEA:40116"/>
    </physiologicalReaction>
</comment>
<comment type="catalytic activity">
    <reaction evidence="3">
        <text>octanoyl-CoA + H2O = octanoate + CoA + H(+)</text>
        <dbReference type="Rhea" id="RHEA:30143"/>
        <dbReference type="ChEBI" id="CHEBI:15377"/>
        <dbReference type="ChEBI" id="CHEBI:15378"/>
        <dbReference type="ChEBI" id="CHEBI:25646"/>
        <dbReference type="ChEBI" id="CHEBI:57287"/>
        <dbReference type="ChEBI" id="CHEBI:57386"/>
    </reaction>
    <physiologicalReaction direction="left-to-right" evidence="3">
        <dbReference type="Rhea" id="RHEA:30144"/>
    </physiologicalReaction>
</comment>
<comment type="catalytic activity">
    <reaction evidence="3">
        <text>decanoyl-CoA + H2O = decanoate + CoA + H(+)</text>
        <dbReference type="Rhea" id="RHEA:40059"/>
        <dbReference type="ChEBI" id="CHEBI:15377"/>
        <dbReference type="ChEBI" id="CHEBI:15378"/>
        <dbReference type="ChEBI" id="CHEBI:27689"/>
        <dbReference type="ChEBI" id="CHEBI:57287"/>
        <dbReference type="ChEBI" id="CHEBI:61430"/>
    </reaction>
    <physiologicalReaction direction="left-to-right" evidence="3">
        <dbReference type="Rhea" id="RHEA:40060"/>
    </physiologicalReaction>
</comment>
<comment type="catalytic activity">
    <reaction evidence="3">
        <text>dodecanoyl-CoA + H2O = dodecanoate + CoA + H(+)</text>
        <dbReference type="Rhea" id="RHEA:30135"/>
        <dbReference type="ChEBI" id="CHEBI:15377"/>
        <dbReference type="ChEBI" id="CHEBI:15378"/>
        <dbReference type="ChEBI" id="CHEBI:18262"/>
        <dbReference type="ChEBI" id="CHEBI:57287"/>
        <dbReference type="ChEBI" id="CHEBI:57375"/>
    </reaction>
    <physiologicalReaction direction="left-to-right" evidence="3">
        <dbReference type="Rhea" id="RHEA:30136"/>
    </physiologicalReaction>
</comment>
<comment type="catalytic activity">
    <reaction evidence="3">
        <text>tetradecanoyl-CoA + H2O = tetradecanoate + CoA + H(+)</text>
        <dbReference type="Rhea" id="RHEA:40119"/>
        <dbReference type="ChEBI" id="CHEBI:15377"/>
        <dbReference type="ChEBI" id="CHEBI:15378"/>
        <dbReference type="ChEBI" id="CHEBI:30807"/>
        <dbReference type="ChEBI" id="CHEBI:57287"/>
        <dbReference type="ChEBI" id="CHEBI:57385"/>
    </reaction>
    <physiologicalReaction direction="left-to-right" evidence="3">
        <dbReference type="Rhea" id="RHEA:40120"/>
    </physiologicalReaction>
</comment>
<comment type="catalytic activity">
    <reaction evidence="2">
        <text>hexadecanoyl-CoA + H2O = hexadecanoate + CoA + H(+)</text>
        <dbReference type="Rhea" id="RHEA:16645"/>
        <dbReference type="ChEBI" id="CHEBI:7896"/>
        <dbReference type="ChEBI" id="CHEBI:15377"/>
        <dbReference type="ChEBI" id="CHEBI:15378"/>
        <dbReference type="ChEBI" id="CHEBI:57287"/>
        <dbReference type="ChEBI" id="CHEBI:57379"/>
        <dbReference type="EC" id="3.1.2.2"/>
    </reaction>
    <physiologicalReaction direction="left-to-right" evidence="3">
        <dbReference type="Rhea" id="RHEA:16646"/>
    </physiologicalReaction>
</comment>
<comment type="pathway">
    <text evidence="3">Lipid metabolism; fatty acid beta-oxidation.</text>
</comment>
<comment type="subunit">
    <text evidence="3">Homotetramer. Interacts with BNIP3.</text>
</comment>
<comment type="subcellular location">
    <subcellularLocation>
        <location evidence="3">Mitochondrion</location>
    </subcellularLocation>
</comment>
<comment type="similarity">
    <text evidence="6">Belongs to the thiolase-like superfamily. Thiolase family.</text>
</comment>
<keyword id="KW-0007">Acetylation</keyword>
<keyword id="KW-0012">Acyltransferase</keyword>
<keyword id="KW-0276">Fatty acid metabolism</keyword>
<keyword id="KW-0378">Hydrolase</keyword>
<keyword id="KW-0443">Lipid metabolism</keyword>
<keyword id="KW-0496">Mitochondrion</keyword>
<keyword id="KW-0597">Phosphoprotein</keyword>
<keyword id="KW-1185">Reference proteome</keyword>
<keyword id="KW-0808">Transferase</keyword>
<keyword id="KW-0809">Transit peptide</keyword>
<reference key="1">
    <citation type="submission" date="2004-11" db="EMBL/GenBank/DDBJ databases">
        <authorList>
            <consortium name="The German cDNA consortium"/>
        </authorList>
    </citation>
    <scope>NUCLEOTIDE SEQUENCE [LARGE SCALE MRNA]</scope>
    <source>
        <tissue>Kidney</tissue>
    </source>
</reference>
<proteinExistence type="evidence at transcript level"/>
<organism>
    <name type="scientific">Pongo abelii</name>
    <name type="common">Sumatran orangutan</name>
    <name type="synonym">Pongo pygmaeus abelii</name>
    <dbReference type="NCBI Taxonomy" id="9601"/>
    <lineage>
        <taxon>Eukaryota</taxon>
        <taxon>Metazoa</taxon>
        <taxon>Chordata</taxon>
        <taxon>Craniata</taxon>
        <taxon>Vertebrata</taxon>
        <taxon>Euteleostomi</taxon>
        <taxon>Mammalia</taxon>
        <taxon>Eutheria</taxon>
        <taxon>Euarchontoglires</taxon>
        <taxon>Primates</taxon>
        <taxon>Haplorrhini</taxon>
        <taxon>Catarrhini</taxon>
        <taxon>Hominidae</taxon>
        <taxon>Pongo</taxon>
    </lineage>
</organism>
<sequence>MALLRGVFVVAAKRTPFGAYGGLLKDFTATDLSEFAAKAALSAGKVSPETVDSVIMGNVLQSSSDAIYLARHVGLRVGIPKETPALTINRLCGSGFQSIVNGCQEICVKEAEVVLCGGTESMSQAPYCVRTVRFGTKLGSDIKLEDSLWVSLTDQHVQLPIAMTAENLAVKHKISREECDKYALQSQQRWKAANDAGYFNDEMAPIEVKTKKGKQTMQVDEHARPQTTLEQLQKLPPVFKKDGTVTAGNASGIADGAGAVIIASEDAVKKHNFTPLARIVGYFVSGCDPSIMGIGPVPAISGALKKAGLSLKDMDLVEVNEAFAPQYLAVERSLDLDISKTNVNGGAIALGHPLGGSGSRITAHLVHELRRRGGKYAVGSACIGGGQGIAVIIQSTA</sequence>
<evidence type="ECO:0000250" key="1"/>
<evidence type="ECO:0000250" key="2">
    <source>
        <dbReference type="UniProtKB" id="P13437"/>
    </source>
</evidence>
<evidence type="ECO:0000250" key="3">
    <source>
        <dbReference type="UniProtKB" id="P42765"/>
    </source>
</evidence>
<evidence type="ECO:0000250" key="4">
    <source>
        <dbReference type="UniProtKB" id="Q8BWT1"/>
    </source>
</evidence>
<evidence type="ECO:0000255" key="5">
    <source>
        <dbReference type="PROSITE-ProRule" id="PRU10020"/>
    </source>
</evidence>
<evidence type="ECO:0000305" key="6"/>
<protein>
    <recommendedName>
        <fullName evidence="6">3-ketoacyl-CoA thiolase, mitochondrial</fullName>
        <ecNumber evidence="3">2.3.1.16</ecNumber>
    </recommendedName>
    <alternativeName>
        <fullName evidence="6">Acetyl-CoA acetyltransferase</fullName>
        <ecNumber evidence="5">2.3.1.9</ecNumber>
    </alternativeName>
    <alternativeName>
        <fullName>Acetyl-CoA acyltransferase</fullName>
    </alternativeName>
    <alternativeName>
        <fullName evidence="6">Acyl-CoA hydrolase, mitochondrial</fullName>
        <ecNumber evidence="3">3.1.2.-</ecNumber>
        <ecNumber evidence="3">3.1.2.1</ecNumber>
        <ecNumber evidence="2">3.1.2.2</ecNumber>
    </alternativeName>
    <alternativeName>
        <fullName>Beta-ketothiolase</fullName>
    </alternativeName>
    <alternativeName>
        <fullName>Mitochondrial 3-oxoacyl-CoA thiolase</fullName>
    </alternativeName>
</protein>
<gene>
    <name type="primary">ACAA2</name>
</gene>
<feature type="chain" id="PRO_0000270499" description="3-ketoacyl-CoA thiolase, mitochondrial">
    <location>
        <begin position="1"/>
        <end position="397"/>
    </location>
</feature>
<feature type="transit peptide" description="Mitochondrion; not cleaved" evidence="1">
    <location>
        <begin position="1"/>
        <end position="16"/>
    </location>
</feature>
<feature type="active site" description="Acyl-thioester intermediate" evidence="3">
    <location>
        <position position="92"/>
    </location>
</feature>
<feature type="active site" description="Proton donor/acceptor" evidence="3">
    <location>
        <position position="382"/>
    </location>
</feature>
<feature type="binding site" evidence="3">
    <location>
        <position position="224"/>
    </location>
    <ligand>
        <name>CoA</name>
        <dbReference type="ChEBI" id="CHEBI:57287"/>
    </ligand>
</feature>
<feature type="binding site" evidence="3">
    <location>
        <position position="227"/>
    </location>
    <ligand>
        <name>CoA</name>
        <dbReference type="ChEBI" id="CHEBI:57287"/>
    </ligand>
</feature>
<feature type="binding site" evidence="3">
    <location>
        <position position="251"/>
    </location>
    <ligand>
        <name>CoA</name>
        <dbReference type="ChEBI" id="CHEBI:57287"/>
    </ligand>
</feature>
<feature type="site" description="Increases nucleophilicity of active site Cys" evidence="3">
    <location>
        <position position="352"/>
    </location>
</feature>
<feature type="modified residue" description="N6-acetyllysine; alternate" evidence="4">
    <location>
        <position position="25"/>
    </location>
</feature>
<feature type="modified residue" description="N6-succinyllysine; alternate" evidence="4">
    <location>
        <position position="25"/>
    </location>
</feature>
<feature type="modified residue" description="N6-succinyllysine" evidence="4">
    <location>
        <position position="45"/>
    </location>
</feature>
<feature type="modified residue" description="Phosphothreonine" evidence="3">
    <location>
        <position position="119"/>
    </location>
</feature>
<feature type="modified residue" description="Phosphoserine" evidence="3">
    <location>
        <position position="121"/>
    </location>
</feature>
<feature type="modified residue" description="Phosphotyrosine" evidence="3">
    <location>
        <position position="127"/>
    </location>
</feature>
<feature type="modified residue" description="Phosphothreonine" evidence="4">
    <location>
        <position position="136"/>
    </location>
</feature>
<feature type="modified residue" description="N6-acetyllysine; alternate" evidence="4">
    <location>
        <position position="137"/>
    </location>
</feature>
<feature type="modified residue" description="N6-succinyllysine; alternate" evidence="4">
    <location>
        <position position="137"/>
    </location>
</feature>
<feature type="modified residue" description="Phosphoserine" evidence="3">
    <location>
        <position position="140"/>
    </location>
</feature>
<feature type="modified residue" description="N6-acetyllysine; alternate" evidence="4">
    <location>
        <position position="143"/>
    </location>
</feature>
<feature type="modified residue" description="N6-succinyllysine; alternate" evidence="4">
    <location>
        <position position="143"/>
    </location>
</feature>
<feature type="modified residue" description="N6-acetyllysine; alternate" evidence="4">
    <location>
        <position position="171"/>
    </location>
</feature>
<feature type="modified residue" description="N6-succinyllysine; alternate" evidence="4">
    <location>
        <position position="171"/>
    </location>
</feature>
<feature type="modified residue" description="N6-acetyllysine; alternate" evidence="4">
    <location>
        <position position="191"/>
    </location>
</feature>
<feature type="modified residue" description="N6-succinyllysine; alternate" evidence="4">
    <location>
        <position position="191"/>
    </location>
</feature>
<feature type="modified residue" description="N6-acetyllysine; alternate" evidence="4">
    <location>
        <position position="209"/>
    </location>
</feature>
<feature type="modified residue" description="N6-succinyllysine; alternate" evidence="4">
    <location>
        <position position="209"/>
    </location>
</feature>
<feature type="modified residue" description="N6-succinyllysine" evidence="4">
    <location>
        <position position="211"/>
    </location>
</feature>
<feature type="modified residue" description="N6-succinyllysine" evidence="4">
    <location>
        <position position="212"/>
    </location>
</feature>
<feature type="modified residue" description="N6-succinyllysine" evidence="4">
    <location>
        <position position="214"/>
    </location>
</feature>
<feature type="modified residue" description="N6-acetyllysine; alternate" evidence="4">
    <location>
        <position position="234"/>
    </location>
</feature>
<feature type="modified residue" description="N6-succinyllysine; alternate" evidence="4">
    <location>
        <position position="234"/>
    </location>
</feature>
<feature type="modified residue" description="N6-succinyllysine" evidence="4">
    <location>
        <position position="240"/>
    </location>
</feature>
<feature type="modified residue" description="N6-acetyllysine" evidence="4">
    <location>
        <position position="241"/>
    </location>
</feature>
<feature type="modified residue" description="N6-acetyllysine" evidence="4">
    <location>
        <position position="269"/>
    </location>
</feature>
<feature type="modified residue" description="N6-acetyllysine" evidence="4">
    <location>
        <position position="270"/>
    </location>
</feature>
<feature type="modified residue" description="N6-acetyllysine; alternate" evidence="4">
    <location>
        <position position="305"/>
    </location>
</feature>
<feature type="modified residue" description="N6-succinyllysine; alternate" evidence="4">
    <location>
        <position position="305"/>
    </location>
</feature>
<feature type="modified residue" description="Phosphoserine" evidence="4">
    <location>
        <position position="310"/>
    </location>
</feature>
<feature type="modified residue" description="N6-acetyllysine; alternate" evidence="4">
    <location>
        <position position="312"/>
    </location>
</feature>
<feature type="modified residue" description="N6-succinyllysine; alternate" evidence="4">
    <location>
        <position position="312"/>
    </location>
</feature>
<feature type="modified residue" description="Phosphoserine" evidence="3">
    <location>
        <position position="333"/>
    </location>
</feature>
<feature type="modified residue" description="N6-acetyllysine" evidence="4">
    <location>
        <position position="340"/>
    </location>
</feature>
<feature type="modified residue" description="N6-acetyllysine" evidence="4">
    <location>
        <position position="375"/>
    </location>
</feature>